<comment type="function">
    <text evidence="1">An accessory protein needed during the final step in the assembly of 30S ribosomal subunit, possibly for assembly of the head region. Essential for efficient processing of 16S rRNA. May be needed both before and after RbfA during the maturation of 16S rRNA. It has affinity for free ribosomal 30S subunits but not for 70S ribosomes.</text>
</comment>
<comment type="subunit">
    <text evidence="1">Binds ribosomal protein uS19.</text>
</comment>
<comment type="subcellular location">
    <subcellularLocation>
        <location evidence="1">Cytoplasm</location>
    </subcellularLocation>
</comment>
<comment type="domain">
    <text evidence="1">The PRC barrel domain binds ribosomal protein uS19.</text>
</comment>
<comment type="similarity">
    <text evidence="1">Belongs to the RimM family.</text>
</comment>
<evidence type="ECO:0000255" key="1">
    <source>
        <dbReference type="HAMAP-Rule" id="MF_00014"/>
    </source>
</evidence>
<proteinExistence type="inferred from homology"/>
<keyword id="KW-0143">Chaperone</keyword>
<keyword id="KW-0963">Cytoplasm</keyword>
<keyword id="KW-1185">Reference proteome</keyword>
<keyword id="KW-0690">Ribosome biogenesis</keyword>
<keyword id="KW-0698">rRNA processing</keyword>
<organism>
    <name type="scientific">Shewanella amazonensis (strain ATCC BAA-1098 / SB2B)</name>
    <dbReference type="NCBI Taxonomy" id="326297"/>
    <lineage>
        <taxon>Bacteria</taxon>
        <taxon>Pseudomonadati</taxon>
        <taxon>Pseudomonadota</taxon>
        <taxon>Gammaproteobacteria</taxon>
        <taxon>Alteromonadales</taxon>
        <taxon>Shewanellaceae</taxon>
        <taxon>Shewanella</taxon>
    </lineage>
</organism>
<accession>A1S3Z1</accession>
<gene>
    <name evidence="1" type="primary">rimM</name>
    <name type="ordered locus">Sama_0890</name>
</gene>
<reference key="1">
    <citation type="submission" date="2006-12" db="EMBL/GenBank/DDBJ databases">
        <title>Complete sequence of Shewanella amazonensis SB2B.</title>
        <authorList>
            <consortium name="US DOE Joint Genome Institute"/>
            <person name="Copeland A."/>
            <person name="Lucas S."/>
            <person name="Lapidus A."/>
            <person name="Barry K."/>
            <person name="Detter J.C."/>
            <person name="Glavina del Rio T."/>
            <person name="Hammon N."/>
            <person name="Israni S."/>
            <person name="Dalin E."/>
            <person name="Tice H."/>
            <person name="Pitluck S."/>
            <person name="Munk A.C."/>
            <person name="Brettin T."/>
            <person name="Bruce D."/>
            <person name="Han C."/>
            <person name="Tapia R."/>
            <person name="Gilna P."/>
            <person name="Schmutz J."/>
            <person name="Larimer F."/>
            <person name="Land M."/>
            <person name="Hauser L."/>
            <person name="Kyrpides N."/>
            <person name="Mikhailova N."/>
            <person name="Fredrickson J."/>
            <person name="Richardson P."/>
        </authorList>
    </citation>
    <scope>NUCLEOTIDE SEQUENCE [LARGE SCALE GENOMIC DNA]</scope>
    <source>
        <strain>ATCC BAA-1098 / SB2B</strain>
    </source>
</reference>
<dbReference type="EMBL" id="CP000507">
    <property type="protein sequence ID" value="ABL99097.1"/>
    <property type="molecule type" value="Genomic_DNA"/>
</dbReference>
<dbReference type="RefSeq" id="WP_011759007.1">
    <property type="nucleotide sequence ID" value="NC_008700.1"/>
</dbReference>
<dbReference type="SMR" id="A1S3Z1"/>
<dbReference type="STRING" id="326297.Sama_0890"/>
<dbReference type="KEGG" id="saz:Sama_0890"/>
<dbReference type="eggNOG" id="COG0806">
    <property type="taxonomic scope" value="Bacteria"/>
</dbReference>
<dbReference type="HOGENOM" id="CLU_077636_1_0_6"/>
<dbReference type="OrthoDB" id="9783509at2"/>
<dbReference type="Proteomes" id="UP000009175">
    <property type="component" value="Chromosome"/>
</dbReference>
<dbReference type="GO" id="GO:0005737">
    <property type="term" value="C:cytoplasm"/>
    <property type="evidence" value="ECO:0007669"/>
    <property type="project" value="UniProtKB-SubCell"/>
</dbReference>
<dbReference type="GO" id="GO:0005840">
    <property type="term" value="C:ribosome"/>
    <property type="evidence" value="ECO:0007669"/>
    <property type="project" value="InterPro"/>
</dbReference>
<dbReference type="GO" id="GO:0043022">
    <property type="term" value="F:ribosome binding"/>
    <property type="evidence" value="ECO:0007669"/>
    <property type="project" value="InterPro"/>
</dbReference>
<dbReference type="GO" id="GO:0042274">
    <property type="term" value="P:ribosomal small subunit biogenesis"/>
    <property type="evidence" value="ECO:0007669"/>
    <property type="project" value="UniProtKB-UniRule"/>
</dbReference>
<dbReference type="GO" id="GO:0006364">
    <property type="term" value="P:rRNA processing"/>
    <property type="evidence" value="ECO:0007669"/>
    <property type="project" value="UniProtKB-UniRule"/>
</dbReference>
<dbReference type="Gene3D" id="2.30.30.240">
    <property type="entry name" value="PRC-barrel domain"/>
    <property type="match status" value="1"/>
</dbReference>
<dbReference type="Gene3D" id="2.40.30.60">
    <property type="entry name" value="RimM"/>
    <property type="match status" value="1"/>
</dbReference>
<dbReference type="HAMAP" id="MF_00014">
    <property type="entry name" value="Ribosome_mat_RimM"/>
    <property type="match status" value="1"/>
</dbReference>
<dbReference type="InterPro" id="IPR027275">
    <property type="entry name" value="PRC-brl_dom"/>
</dbReference>
<dbReference type="InterPro" id="IPR011033">
    <property type="entry name" value="PRC_barrel-like_sf"/>
</dbReference>
<dbReference type="InterPro" id="IPR011961">
    <property type="entry name" value="RimM"/>
</dbReference>
<dbReference type="InterPro" id="IPR002676">
    <property type="entry name" value="RimM_N"/>
</dbReference>
<dbReference type="InterPro" id="IPR036976">
    <property type="entry name" value="RimM_N_sf"/>
</dbReference>
<dbReference type="InterPro" id="IPR009000">
    <property type="entry name" value="Transl_B-barrel_sf"/>
</dbReference>
<dbReference type="NCBIfam" id="TIGR02273">
    <property type="entry name" value="16S_RimM"/>
    <property type="match status" value="1"/>
</dbReference>
<dbReference type="PANTHER" id="PTHR33692">
    <property type="entry name" value="RIBOSOME MATURATION FACTOR RIMM"/>
    <property type="match status" value="1"/>
</dbReference>
<dbReference type="PANTHER" id="PTHR33692:SF1">
    <property type="entry name" value="RIBOSOME MATURATION FACTOR RIMM"/>
    <property type="match status" value="1"/>
</dbReference>
<dbReference type="Pfam" id="PF05239">
    <property type="entry name" value="PRC"/>
    <property type="match status" value="1"/>
</dbReference>
<dbReference type="Pfam" id="PF01782">
    <property type="entry name" value="RimM"/>
    <property type="match status" value="1"/>
</dbReference>
<dbReference type="SUPFAM" id="SSF50346">
    <property type="entry name" value="PRC-barrel domain"/>
    <property type="match status" value="1"/>
</dbReference>
<dbReference type="SUPFAM" id="SSF50447">
    <property type="entry name" value="Translation proteins"/>
    <property type="match status" value="1"/>
</dbReference>
<name>RIMM_SHEAM</name>
<feature type="chain" id="PRO_0000321752" description="Ribosome maturation factor RimM">
    <location>
        <begin position="1"/>
        <end position="176"/>
    </location>
</feature>
<feature type="domain" description="PRC barrel" evidence="1">
    <location>
        <begin position="97"/>
        <end position="176"/>
    </location>
</feature>
<sequence>MSSNQQPVVVGKIGSTYGVKGWMKITAYTDSVEGIFDYSPWFLKEHGEWREVKVSQWRFHGKAVVAELEGVSNREQAQMLTNCEIGILAEQMPELPEDEFYWRDLIGCEVLNTKGYNLGKVDQILETGSNDVLMVKANAKDAFGKTERMIPYLPDQFVLEVKLSEKQIIVDWDPDF</sequence>
<protein>
    <recommendedName>
        <fullName evidence="1">Ribosome maturation factor RimM</fullName>
    </recommendedName>
</protein>